<accession>P85564</accession>
<keyword id="KW-0027">Amidation</keyword>
<keyword id="KW-0903">Direct protein sequencing</keyword>
<keyword id="KW-0527">Neuropeptide</keyword>
<keyword id="KW-0964">Secreted</keyword>
<sequence length="17" mass="1782">SGETSGEGNGMWFGPRL</sequence>
<organism>
    <name type="scientific">Blepharodera discoidalis</name>
    <name type="common">Cockroach</name>
    <dbReference type="NCBI Taxonomy" id="521524"/>
    <lineage>
        <taxon>Eukaryota</taxon>
        <taxon>Metazoa</taxon>
        <taxon>Ecdysozoa</taxon>
        <taxon>Arthropoda</taxon>
        <taxon>Hexapoda</taxon>
        <taxon>Insecta</taxon>
        <taxon>Pterygota</taxon>
        <taxon>Neoptera</taxon>
        <taxon>Polyneoptera</taxon>
        <taxon>Dictyoptera</taxon>
        <taxon>Blattodea</taxon>
        <taxon>Blaberoidea</taxon>
        <taxon>Blaberidae</taxon>
        <taxon>Epilamprinae</taxon>
        <taxon>Blepharodera</taxon>
    </lineage>
</organism>
<protein>
    <recommendedName>
        <fullName evidence="1">Pyrokinin-5</fullName>
    </recommendedName>
    <alternativeName>
        <fullName evidence="4">BleDi-Capa-PK</fullName>
    </alternativeName>
    <alternativeName>
        <fullName evidence="1">FXPRL-amide</fullName>
    </alternativeName>
</protein>
<comment type="function">
    <text evidence="1">Myoactive.</text>
</comment>
<comment type="subcellular location">
    <subcellularLocation>
        <location evidence="5">Secreted</location>
    </subcellularLocation>
</comment>
<comment type="similarity">
    <text evidence="2">Belongs to the pyrokinin family.</text>
</comment>
<dbReference type="GO" id="GO:0005576">
    <property type="term" value="C:extracellular region"/>
    <property type="evidence" value="ECO:0007669"/>
    <property type="project" value="UniProtKB-SubCell"/>
</dbReference>
<dbReference type="GO" id="GO:0005184">
    <property type="term" value="F:neuropeptide hormone activity"/>
    <property type="evidence" value="ECO:0007669"/>
    <property type="project" value="InterPro"/>
</dbReference>
<dbReference type="GO" id="GO:0007218">
    <property type="term" value="P:neuropeptide signaling pathway"/>
    <property type="evidence" value="ECO:0007669"/>
    <property type="project" value="UniProtKB-KW"/>
</dbReference>
<dbReference type="InterPro" id="IPR001484">
    <property type="entry name" value="Pyrokinin_CS"/>
</dbReference>
<dbReference type="PROSITE" id="PS00539">
    <property type="entry name" value="PYROKININ"/>
    <property type="match status" value="1"/>
</dbReference>
<proteinExistence type="evidence at protein level"/>
<evidence type="ECO:0000250" key="1">
    <source>
        <dbReference type="UniProtKB" id="P82617"/>
    </source>
</evidence>
<evidence type="ECO:0000255" key="2"/>
<evidence type="ECO:0000269" key="3">
    <source>
    </source>
</evidence>
<evidence type="ECO:0000303" key="4">
    <source>
    </source>
</evidence>
<evidence type="ECO:0000305" key="5"/>
<name>PPK5_BLEDI</name>
<reference evidence="5" key="1">
    <citation type="journal article" date="2009" name="BMC Evol. Biol.">
        <title>A proteomic approach for studying insect phylogeny: CAPA peptides of ancient insect taxa (Dictyoptera, Blattoptera) as a test case.</title>
        <authorList>
            <person name="Roth S."/>
            <person name="Fromm B."/>
            <person name="Gaede G."/>
            <person name="Predel R."/>
        </authorList>
    </citation>
    <scope>PROTEIN SEQUENCE</scope>
    <scope>AMIDATION AT LEU-17</scope>
    <source>
        <tissue evidence="3">Abdominal perisympathetic organs</tissue>
    </source>
</reference>
<feature type="peptide" id="PRO_0000378682" description="Pyrokinin-5" evidence="3">
    <location>
        <begin position="1"/>
        <end position="17"/>
    </location>
</feature>
<feature type="modified residue" description="Leucine amide" evidence="3">
    <location>
        <position position="17"/>
    </location>
</feature>